<sequence>MNLGLNVKEIERYDLVILLMAVALTCFGVVMVYSASSVMATKKFHDGFYFLKRQGVYALLGFGVMAVAMRIDYRTWREYAVPILLGCLFLLFLVFIPGIGGAAKGASRWIRLPGFNFQPSELTKIALIVYMAYSLDKKQDKVKFFSTGFLPYMVLLSVVLLILLKQHDLGAALTMGLVAIIMLFAAGTRPRYIIAMGMMALPILYFLVMNVDYRRRRILAYLNPWEDPTDTGFQIIQSWLAFGNGGVLGQGLGEGKQKMFYLPEAHTDFILSVTGEELGLIGVTVIAAMFLMLVLRGVRVALMAQEPFGRFLAFGIATLLGIQSFVNMAVVTGLLPTKGLALPFISYGGSSLIVTLFAVGILLNISTRLKGAP</sequence>
<comment type="function">
    <text evidence="1">Peptidoglycan polymerase that is essential for cell division.</text>
</comment>
<comment type="catalytic activity">
    <reaction evidence="1">
        <text>[GlcNAc-(1-&gt;4)-Mur2Ac(oyl-L-Ala-gamma-D-Glu-L-Lys-D-Ala-D-Ala)](n)-di-trans,octa-cis-undecaprenyl diphosphate + beta-D-GlcNAc-(1-&gt;4)-Mur2Ac(oyl-L-Ala-gamma-D-Glu-L-Lys-D-Ala-D-Ala)-di-trans,octa-cis-undecaprenyl diphosphate = [GlcNAc-(1-&gt;4)-Mur2Ac(oyl-L-Ala-gamma-D-Glu-L-Lys-D-Ala-D-Ala)](n+1)-di-trans,octa-cis-undecaprenyl diphosphate + di-trans,octa-cis-undecaprenyl diphosphate + H(+)</text>
        <dbReference type="Rhea" id="RHEA:23708"/>
        <dbReference type="Rhea" id="RHEA-COMP:9602"/>
        <dbReference type="Rhea" id="RHEA-COMP:9603"/>
        <dbReference type="ChEBI" id="CHEBI:15378"/>
        <dbReference type="ChEBI" id="CHEBI:58405"/>
        <dbReference type="ChEBI" id="CHEBI:60033"/>
        <dbReference type="ChEBI" id="CHEBI:78435"/>
        <dbReference type="EC" id="2.4.99.28"/>
    </reaction>
</comment>
<comment type="pathway">
    <text evidence="1">Cell wall biogenesis; peptidoglycan biosynthesis.</text>
</comment>
<comment type="subcellular location">
    <subcellularLocation>
        <location evidence="1">Cell inner membrane</location>
        <topology evidence="1">Multi-pass membrane protein</topology>
    </subcellularLocation>
    <text evidence="1">Localizes to the division septum.</text>
</comment>
<comment type="similarity">
    <text evidence="1">Belongs to the SEDS family. FtsW subfamily.</text>
</comment>
<reference key="1">
    <citation type="journal article" date="2003" name="Science">
        <title>Genome of Geobacter sulfurreducens: metal reduction in subsurface environments.</title>
        <authorList>
            <person name="Methe B.A."/>
            <person name="Nelson K.E."/>
            <person name="Eisen J.A."/>
            <person name="Paulsen I.T."/>
            <person name="Nelson W.C."/>
            <person name="Heidelberg J.F."/>
            <person name="Wu D."/>
            <person name="Wu M."/>
            <person name="Ward N.L."/>
            <person name="Beanan M.J."/>
            <person name="Dodson R.J."/>
            <person name="Madupu R."/>
            <person name="Brinkac L.M."/>
            <person name="Daugherty S.C."/>
            <person name="DeBoy R.T."/>
            <person name="Durkin A.S."/>
            <person name="Gwinn M.L."/>
            <person name="Kolonay J.F."/>
            <person name="Sullivan S.A."/>
            <person name="Haft D.H."/>
            <person name="Selengut J."/>
            <person name="Davidsen T.M."/>
            <person name="Zafar N."/>
            <person name="White O."/>
            <person name="Tran B."/>
            <person name="Romero C."/>
            <person name="Forberger H.A."/>
            <person name="Weidman J.F."/>
            <person name="Khouri H.M."/>
            <person name="Feldblyum T.V."/>
            <person name="Utterback T.R."/>
            <person name="Van Aken S.E."/>
            <person name="Lovley D.R."/>
            <person name="Fraser C.M."/>
        </authorList>
    </citation>
    <scope>NUCLEOTIDE SEQUENCE [LARGE SCALE GENOMIC DNA]</scope>
    <source>
        <strain>ATCC 51573 / DSM 12127 / PCA</strain>
    </source>
</reference>
<organism>
    <name type="scientific">Geobacter sulfurreducens (strain ATCC 51573 / DSM 12127 / PCA)</name>
    <dbReference type="NCBI Taxonomy" id="243231"/>
    <lineage>
        <taxon>Bacteria</taxon>
        <taxon>Pseudomonadati</taxon>
        <taxon>Thermodesulfobacteriota</taxon>
        <taxon>Desulfuromonadia</taxon>
        <taxon>Geobacterales</taxon>
        <taxon>Geobacteraceae</taxon>
        <taxon>Geobacter</taxon>
    </lineage>
</organism>
<accession>Q748D5</accession>
<gene>
    <name evidence="1" type="primary">ftsW</name>
    <name type="ordered locus">GSU3070</name>
</gene>
<feature type="chain" id="PRO_0000415185" description="Probable peptidoglycan glycosyltransferase FtsW">
    <location>
        <begin position="1"/>
        <end position="373"/>
    </location>
</feature>
<feature type="transmembrane region" description="Helical" evidence="1">
    <location>
        <begin position="15"/>
        <end position="35"/>
    </location>
</feature>
<feature type="transmembrane region" description="Helical" evidence="1">
    <location>
        <begin position="48"/>
        <end position="68"/>
    </location>
</feature>
<feature type="transmembrane region" description="Helical" evidence="1">
    <location>
        <begin position="80"/>
        <end position="100"/>
    </location>
</feature>
<feature type="transmembrane region" description="Helical" evidence="1">
    <location>
        <begin position="144"/>
        <end position="164"/>
    </location>
</feature>
<feature type="transmembrane region" description="Helical" evidence="1">
    <location>
        <begin position="168"/>
        <end position="188"/>
    </location>
</feature>
<feature type="transmembrane region" description="Helical" evidence="1">
    <location>
        <begin position="192"/>
        <end position="212"/>
    </location>
</feature>
<feature type="transmembrane region" description="Helical" evidence="1">
    <location>
        <begin position="278"/>
        <end position="298"/>
    </location>
</feature>
<feature type="transmembrane region" description="Helical" evidence="1">
    <location>
        <begin position="311"/>
        <end position="331"/>
    </location>
</feature>
<feature type="transmembrane region" description="Helical" evidence="1">
    <location>
        <begin position="342"/>
        <end position="362"/>
    </location>
</feature>
<evidence type="ECO:0000255" key="1">
    <source>
        <dbReference type="HAMAP-Rule" id="MF_00913"/>
    </source>
</evidence>
<dbReference type="EC" id="2.4.99.28" evidence="1"/>
<dbReference type="EMBL" id="AE017180">
    <property type="protein sequence ID" value="AAR36462.2"/>
    <property type="molecule type" value="Genomic_DNA"/>
</dbReference>
<dbReference type="RefSeq" id="NP_954112.2">
    <property type="nucleotide sequence ID" value="NC_002939.5"/>
</dbReference>
<dbReference type="RefSeq" id="WP_010943695.1">
    <property type="nucleotide sequence ID" value="NC_002939.5"/>
</dbReference>
<dbReference type="SMR" id="Q748D5"/>
<dbReference type="FunCoup" id="Q748D5">
    <property type="interactions" value="206"/>
</dbReference>
<dbReference type="STRING" id="243231.GSU3070"/>
<dbReference type="EnsemblBacteria" id="AAR36462">
    <property type="protein sequence ID" value="AAR36462"/>
    <property type="gene ID" value="GSU3070"/>
</dbReference>
<dbReference type="KEGG" id="gsu:GSU3070"/>
<dbReference type="PATRIC" id="fig|243231.5.peg.3093"/>
<dbReference type="eggNOG" id="COG0772">
    <property type="taxonomic scope" value="Bacteria"/>
</dbReference>
<dbReference type="HOGENOM" id="CLU_029243_0_1_7"/>
<dbReference type="InParanoid" id="Q748D5"/>
<dbReference type="OrthoDB" id="9768187at2"/>
<dbReference type="UniPathway" id="UPA00219"/>
<dbReference type="Proteomes" id="UP000000577">
    <property type="component" value="Chromosome"/>
</dbReference>
<dbReference type="GO" id="GO:0032153">
    <property type="term" value="C:cell division site"/>
    <property type="evidence" value="ECO:0000318"/>
    <property type="project" value="GO_Central"/>
</dbReference>
<dbReference type="GO" id="GO:0005886">
    <property type="term" value="C:plasma membrane"/>
    <property type="evidence" value="ECO:0000318"/>
    <property type="project" value="GO_Central"/>
</dbReference>
<dbReference type="GO" id="GO:0015648">
    <property type="term" value="F:lipid-linked peptidoglycan transporter activity"/>
    <property type="evidence" value="ECO:0000318"/>
    <property type="project" value="GO_Central"/>
</dbReference>
<dbReference type="GO" id="GO:0008955">
    <property type="term" value="F:peptidoglycan glycosyltransferase activity"/>
    <property type="evidence" value="ECO:0007669"/>
    <property type="project" value="RHEA"/>
</dbReference>
<dbReference type="GO" id="GO:0051301">
    <property type="term" value="P:cell division"/>
    <property type="evidence" value="ECO:0000318"/>
    <property type="project" value="GO_Central"/>
</dbReference>
<dbReference type="GO" id="GO:0071555">
    <property type="term" value="P:cell wall organization"/>
    <property type="evidence" value="ECO:0007669"/>
    <property type="project" value="UniProtKB-KW"/>
</dbReference>
<dbReference type="GO" id="GO:0009252">
    <property type="term" value="P:peptidoglycan biosynthetic process"/>
    <property type="evidence" value="ECO:0007669"/>
    <property type="project" value="UniProtKB-UniPathway"/>
</dbReference>
<dbReference type="GO" id="GO:0008360">
    <property type="term" value="P:regulation of cell shape"/>
    <property type="evidence" value="ECO:0000318"/>
    <property type="project" value="GO_Central"/>
</dbReference>
<dbReference type="HAMAP" id="MF_00913">
    <property type="entry name" value="PGT_FtsW_proteobact"/>
    <property type="match status" value="1"/>
</dbReference>
<dbReference type="InterPro" id="IPR018365">
    <property type="entry name" value="Cell_cycle_FtsW-rel_CS"/>
</dbReference>
<dbReference type="InterPro" id="IPR013437">
    <property type="entry name" value="FtsW"/>
</dbReference>
<dbReference type="InterPro" id="IPR001182">
    <property type="entry name" value="FtsW/RodA"/>
</dbReference>
<dbReference type="NCBIfam" id="TIGR02614">
    <property type="entry name" value="ftsW"/>
    <property type="match status" value="1"/>
</dbReference>
<dbReference type="PANTHER" id="PTHR30474">
    <property type="entry name" value="CELL CYCLE PROTEIN"/>
    <property type="match status" value="1"/>
</dbReference>
<dbReference type="PANTHER" id="PTHR30474:SF2">
    <property type="entry name" value="PEPTIDOGLYCAN GLYCOSYLTRANSFERASE FTSW-RELATED"/>
    <property type="match status" value="1"/>
</dbReference>
<dbReference type="Pfam" id="PF01098">
    <property type="entry name" value="FTSW_RODA_SPOVE"/>
    <property type="match status" value="1"/>
</dbReference>
<dbReference type="PROSITE" id="PS00428">
    <property type="entry name" value="FTSW_RODA_SPOVE"/>
    <property type="match status" value="1"/>
</dbReference>
<proteinExistence type="inferred from homology"/>
<keyword id="KW-0131">Cell cycle</keyword>
<keyword id="KW-0132">Cell division</keyword>
<keyword id="KW-0997">Cell inner membrane</keyword>
<keyword id="KW-1003">Cell membrane</keyword>
<keyword id="KW-0133">Cell shape</keyword>
<keyword id="KW-0961">Cell wall biogenesis/degradation</keyword>
<keyword id="KW-0328">Glycosyltransferase</keyword>
<keyword id="KW-0472">Membrane</keyword>
<keyword id="KW-0573">Peptidoglycan synthesis</keyword>
<keyword id="KW-1185">Reference proteome</keyword>
<keyword id="KW-0808">Transferase</keyword>
<keyword id="KW-0812">Transmembrane</keyword>
<keyword id="KW-1133">Transmembrane helix</keyword>
<name>FTSW_GEOSL</name>
<protein>
    <recommendedName>
        <fullName evidence="1">Probable peptidoglycan glycosyltransferase FtsW</fullName>
        <shortName evidence="1">PGT</shortName>
        <ecNumber evidence="1">2.4.99.28</ecNumber>
    </recommendedName>
    <alternativeName>
        <fullName evidence="1">Cell division protein FtsW</fullName>
    </alternativeName>
    <alternativeName>
        <fullName evidence="1">Cell wall polymerase</fullName>
    </alternativeName>
    <alternativeName>
        <fullName evidence="1">Peptidoglycan polymerase</fullName>
        <shortName evidence="1">PG polymerase</shortName>
    </alternativeName>
</protein>